<comment type="function">
    <text evidence="5">Is responsible for the charging of tRNA(Phe) with phenylalanine in mitochondrial translation. To a lesser extent, also catalyzes direct attachment of m-Tyr (an oxidized version of Phe) to tRNA(Phe), thereby opening the way for delivery of the misacylated tRNA to the ribosome and incorporation of ROS-damaged amino acid into proteins.</text>
</comment>
<comment type="catalytic activity">
    <reaction evidence="2">
        <text>tRNA(Phe) + L-phenylalanine + ATP = L-phenylalanyl-tRNA(Phe) + AMP + diphosphate + H(+)</text>
        <dbReference type="Rhea" id="RHEA:19413"/>
        <dbReference type="Rhea" id="RHEA-COMP:9668"/>
        <dbReference type="Rhea" id="RHEA-COMP:9699"/>
        <dbReference type="ChEBI" id="CHEBI:15378"/>
        <dbReference type="ChEBI" id="CHEBI:30616"/>
        <dbReference type="ChEBI" id="CHEBI:33019"/>
        <dbReference type="ChEBI" id="CHEBI:58095"/>
        <dbReference type="ChEBI" id="CHEBI:78442"/>
        <dbReference type="ChEBI" id="CHEBI:78531"/>
        <dbReference type="ChEBI" id="CHEBI:456215"/>
        <dbReference type="EC" id="6.1.1.20"/>
    </reaction>
</comment>
<comment type="subunit">
    <text evidence="1">Monomer.</text>
</comment>
<comment type="subcellular location">
    <subcellularLocation>
        <location evidence="6">Mitochondrion matrix</location>
    </subcellularLocation>
    <subcellularLocation>
        <location evidence="5">Mitochondrion</location>
    </subcellularLocation>
</comment>
<comment type="tissue specificity">
    <text evidence="5">Mainly expressed in the Purkinje cell of cerebellum.</text>
</comment>
<comment type="similarity">
    <text evidence="6">Belongs to the class-II aminoacyl-tRNA synthetase family.</text>
</comment>
<sequence>MVCLAFIRAAHEHLYLVRKVSHVCRCHQHRAWGSRPAASQFAVQGAPGRVLELLGKSYPQDDHTNLTQKVLSKVGRNLHNQKFHPLWLIKERVKEHFYQQYMGRSRTPLFSVYDQLSPVVTTWQNFDSLLIPADHPSRKKGDNYYLNRGHMLRAHTSAHQWDLLHAGLNAFLVVGDVYRRDQIDSQHYPVFHQLEGVRLFSKHELFAGVKDGESLQLFEESSRSAHKQETHTMEAVKLVEFDLKQVLTRLVTHLFGDGLEVRWVDCYFPFTHPSFEMEINFRGEWLEVLGCGVMEQQLVNSAGAQDRIGWAFGLGLERLAMVLYDIPDIRLFWSEDERFLKQFRLSDINQSVKFQRWFFQEERATGIQRKMGRQLCPFSKYPAVFNDISFWLPSENYTENDFYDIVRTVGGDLVEKVDLIDKFEHPKTHRTSHCYRITYRHMERTLSQREVSSVHQAVQEAAVQLLGVEGRF</sequence>
<reference key="1">
    <citation type="journal article" date="2004" name="Genome Res.">
        <title>The status, quality, and expansion of the NIH full-length cDNA project: the Mammalian Gene Collection (MGC).</title>
        <authorList>
            <consortium name="The MGC Project Team"/>
        </authorList>
    </citation>
    <scope>NUCLEOTIDE SEQUENCE [LARGE SCALE MRNA]</scope>
    <source>
        <tissue>Kidney</tissue>
    </source>
</reference>
<reference key="2">
    <citation type="journal article" date="2016" name="Hum. Mutat.">
        <title>A newly identified missense mutation in FARS2 causes autosomal-recessive spastic paraplegia.</title>
        <authorList>
            <person name="Yang Y."/>
            <person name="Liu W."/>
            <person name="Fang Z."/>
            <person name="Shi J."/>
            <person name="Che F."/>
            <person name="He C."/>
            <person name="Yao L."/>
            <person name="Wang E."/>
            <person name="Wu Y."/>
        </authorList>
    </citation>
    <scope>TISSUE SPECIFICITY</scope>
    <scope>SUBCELLULAR LOCATION</scope>
</reference>
<keyword id="KW-0007">Acetylation</keyword>
<keyword id="KW-0030">Aminoacyl-tRNA synthetase</keyword>
<keyword id="KW-0067">ATP-binding</keyword>
<keyword id="KW-0436">Ligase</keyword>
<keyword id="KW-0496">Mitochondrion</keyword>
<keyword id="KW-0547">Nucleotide-binding</keyword>
<keyword id="KW-0648">Protein biosynthesis</keyword>
<keyword id="KW-1185">Reference proteome</keyword>
<keyword id="KW-0809">Transit peptide</keyword>
<feature type="transit peptide" description="Mitochondrion" evidence="3">
    <location>
        <begin position="1"/>
        <end status="unknown"/>
    </location>
</feature>
<feature type="chain" id="PRO_0000035815" description="Phenylalanine--tRNA ligase, mitochondrial">
    <location>
        <begin status="unknown"/>
        <end position="472"/>
    </location>
</feature>
<feature type="domain" description="FDX-ACB" evidence="4">
    <location>
        <begin position="379"/>
        <end position="471"/>
    </location>
</feature>
<feature type="binding site" evidence="1">
    <location>
        <begin position="157"/>
        <end position="160"/>
    </location>
    <ligand>
        <name>substrate</name>
    </ligand>
</feature>
<feature type="binding site" evidence="1">
    <location>
        <position position="179"/>
    </location>
    <ligand>
        <name>substrate</name>
    </ligand>
</feature>
<feature type="binding site" evidence="1">
    <location>
        <begin position="186"/>
        <end position="188"/>
    </location>
    <ligand>
        <name>substrate</name>
    </ligand>
</feature>
<feature type="binding site" evidence="1">
    <location>
        <begin position="193"/>
        <end position="195"/>
    </location>
    <ligand>
        <name>substrate</name>
    </ligand>
</feature>
<feature type="binding site" evidence="1">
    <location>
        <position position="287"/>
    </location>
    <ligand>
        <name>substrate</name>
    </ligand>
</feature>
<feature type="binding site" evidence="1">
    <location>
        <position position="312"/>
    </location>
    <ligand>
        <name>substrate</name>
    </ligand>
</feature>
<feature type="modified residue" description="N6-acetyllysine" evidence="2">
    <location>
        <position position="202"/>
    </location>
</feature>
<gene>
    <name type="primary">Fars2</name>
    <name type="synonym">Fars1</name>
</gene>
<proteinExistence type="evidence at transcript level"/>
<evidence type="ECO:0000250" key="1"/>
<evidence type="ECO:0000250" key="2">
    <source>
        <dbReference type="UniProtKB" id="O95363"/>
    </source>
</evidence>
<evidence type="ECO:0000255" key="3"/>
<evidence type="ECO:0000255" key="4">
    <source>
        <dbReference type="PROSITE-ProRule" id="PRU00778"/>
    </source>
</evidence>
<evidence type="ECO:0000269" key="5">
    <source>
    </source>
</evidence>
<evidence type="ECO:0000305" key="6"/>
<name>SYFM_RAT</name>
<accession>Q6AYQ3</accession>
<organism>
    <name type="scientific">Rattus norvegicus</name>
    <name type="common">Rat</name>
    <dbReference type="NCBI Taxonomy" id="10116"/>
    <lineage>
        <taxon>Eukaryota</taxon>
        <taxon>Metazoa</taxon>
        <taxon>Chordata</taxon>
        <taxon>Craniata</taxon>
        <taxon>Vertebrata</taxon>
        <taxon>Euteleostomi</taxon>
        <taxon>Mammalia</taxon>
        <taxon>Eutheria</taxon>
        <taxon>Euarchontoglires</taxon>
        <taxon>Glires</taxon>
        <taxon>Rodentia</taxon>
        <taxon>Myomorpha</taxon>
        <taxon>Muroidea</taxon>
        <taxon>Muridae</taxon>
        <taxon>Murinae</taxon>
        <taxon>Rattus</taxon>
    </lineage>
</organism>
<protein>
    <recommendedName>
        <fullName>Phenylalanine--tRNA ligase, mitochondrial</fullName>
        <ecNumber evidence="2">6.1.1.20</ecNumber>
    </recommendedName>
    <alternativeName>
        <fullName>Phenylalanyl-tRNA synthetase</fullName>
        <shortName>PheRS</shortName>
    </alternativeName>
</protein>
<dbReference type="EC" id="6.1.1.20" evidence="2"/>
<dbReference type="EMBL" id="BC078956">
    <property type="protein sequence ID" value="AAH78956.1"/>
    <property type="molecule type" value="mRNA"/>
</dbReference>
<dbReference type="RefSeq" id="NP_001013157.1">
    <property type="nucleotide sequence ID" value="NM_001013139.1"/>
</dbReference>
<dbReference type="SMR" id="Q6AYQ3"/>
<dbReference type="FunCoup" id="Q6AYQ3">
    <property type="interactions" value="2313"/>
</dbReference>
<dbReference type="STRING" id="10116.ENSRNOP00000021660"/>
<dbReference type="ChEMBL" id="CHEMBL3757"/>
<dbReference type="PhosphoSitePlus" id="Q6AYQ3"/>
<dbReference type="PaxDb" id="10116-ENSRNOP00000021660"/>
<dbReference type="Ensembl" id="ENSRNOT00000021660.8">
    <property type="protein sequence ID" value="ENSRNOP00000021660.5"/>
    <property type="gene ID" value="ENSRNOG00000016135.8"/>
</dbReference>
<dbReference type="GeneID" id="306879"/>
<dbReference type="KEGG" id="rno:306879"/>
<dbReference type="UCSC" id="RGD:1309416">
    <property type="organism name" value="rat"/>
</dbReference>
<dbReference type="AGR" id="RGD:1309416"/>
<dbReference type="CTD" id="10667"/>
<dbReference type="RGD" id="1309416">
    <property type="gene designation" value="Fars2"/>
</dbReference>
<dbReference type="eggNOG" id="KOG2783">
    <property type="taxonomic scope" value="Eukaryota"/>
</dbReference>
<dbReference type="GeneTree" id="ENSGT00940000158071"/>
<dbReference type="HOGENOM" id="CLU_022696_1_0_1"/>
<dbReference type="InParanoid" id="Q6AYQ3"/>
<dbReference type="OMA" id="PISHYPQ"/>
<dbReference type="PhylomeDB" id="Q6AYQ3"/>
<dbReference type="TreeFam" id="TF105798"/>
<dbReference type="PRO" id="PR:Q6AYQ3"/>
<dbReference type="Proteomes" id="UP000002494">
    <property type="component" value="Chromosome 17"/>
</dbReference>
<dbReference type="Bgee" id="ENSRNOG00000016135">
    <property type="expression patterns" value="Expressed in heart and 19 other cell types or tissues"/>
</dbReference>
<dbReference type="ExpressionAtlas" id="Q6AYQ3">
    <property type="expression patterns" value="baseline and differential"/>
</dbReference>
<dbReference type="GO" id="GO:0005737">
    <property type="term" value="C:cytoplasm"/>
    <property type="evidence" value="ECO:0000318"/>
    <property type="project" value="GO_Central"/>
</dbReference>
<dbReference type="GO" id="GO:0005759">
    <property type="term" value="C:mitochondrial matrix"/>
    <property type="evidence" value="ECO:0007669"/>
    <property type="project" value="UniProtKB-SubCell"/>
</dbReference>
<dbReference type="GO" id="GO:0005739">
    <property type="term" value="C:mitochondrion"/>
    <property type="evidence" value="ECO:0000314"/>
    <property type="project" value="UniProtKB"/>
</dbReference>
<dbReference type="GO" id="GO:0005524">
    <property type="term" value="F:ATP binding"/>
    <property type="evidence" value="ECO:0007669"/>
    <property type="project" value="UniProtKB-KW"/>
</dbReference>
<dbReference type="GO" id="GO:0004826">
    <property type="term" value="F:phenylalanine-tRNA ligase activity"/>
    <property type="evidence" value="ECO:0000250"/>
    <property type="project" value="UniProtKB"/>
</dbReference>
<dbReference type="GO" id="GO:0000049">
    <property type="term" value="F:tRNA binding"/>
    <property type="evidence" value="ECO:0000250"/>
    <property type="project" value="UniProtKB"/>
</dbReference>
<dbReference type="GO" id="GO:0006432">
    <property type="term" value="P:phenylalanyl-tRNA aminoacylation"/>
    <property type="evidence" value="ECO:0000250"/>
    <property type="project" value="UniProtKB"/>
</dbReference>
<dbReference type="GO" id="GO:0008033">
    <property type="term" value="P:tRNA processing"/>
    <property type="evidence" value="ECO:0000250"/>
    <property type="project" value="UniProtKB"/>
</dbReference>
<dbReference type="CDD" id="cd00496">
    <property type="entry name" value="PheRS_alpha_core"/>
    <property type="match status" value="1"/>
</dbReference>
<dbReference type="FunFam" id="3.30.70.380:FF:000002">
    <property type="entry name" value="phenylalanine--tRNA ligase, mitochondrial"/>
    <property type="match status" value="1"/>
</dbReference>
<dbReference type="FunFam" id="3.30.930.10:FF:000041">
    <property type="entry name" value="Phenylalanyl-tRNA synthetase 2, mitochondrial"/>
    <property type="match status" value="1"/>
</dbReference>
<dbReference type="Gene3D" id="3.30.930.10">
    <property type="entry name" value="Bira Bifunctional Protein, Domain 2"/>
    <property type="match status" value="1"/>
</dbReference>
<dbReference type="Gene3D" id="3.30.70.380">
    <property type="entry name" value="Ferrodoxin-fold anticodon-binding domain"/>
    <property type="match status" value="1"/>
</dbReference>
<dbReference type="InterPro" id="IPR006195">
    <property type="entry name" value="aa-tRNA-synth_II"/>
</dbReference>
<dbReference type="InterPro" id="IPR045864">
    <property type="entry name" value="aa-tRNA-synth_II/BPL/LPL"/>
</dbReference>
<dbReference type="InterPro" id="IPR005121">
    <property type="entry name" value="Fdx_antiC-bd"/>
</dbReference>
<dbReference type="InterPro" id="IPR036690">
    <property type="entry name" value="Fdx_antiC-bd_sf"/>
</dbReference>
<dbReference type="InterPro" id="IPR004530">
    <property type="entry name" value="Phe-tRNA-synth_IIc_mito"/>
</dbReference>
<dbReference type="InterPro" id="IPR002319">
    <property type="entry name" value="Phenylalanyl-tRNA_Synthase"/>
</dbReference>
<dbReference type="NCBIfam" id="TIGR00469">
    <property type="entry name" value="pheS_mito"/>
    <property type="match status" value="1"/>
</dbReference>
<dbReference type="PANTHER" id="PTHR11538:SF41">
    <property type="entry name" value="PHENYLALANINE--TRNA LIGASE, MITOCHONDRIAL"/>
    <property type="match status" value="1"/>
</dbReference>
<dbReference type="PANTHER" id="PTHR11538">
    <property type="entry name" value="PHENYLALANYL-TRNA SYNTHETASE"/>
    <property type="match status" value="1"/>
</dbReference>
<dbReference type="Pfam" id="PF03147">
    <property type="entry name" value="FDX-ACB"/>
    <property type="match status" value="1"/>
</dbReference>
<dbReference type="Pfam" id="PF01409">
    <property type="entry name" value="tRNA-synt_2d"/>
    <property type="match status" value="2"/>
</dbReference>
<dbReference type="SMART" id="SM00896">
    <property type="entry name" value="FDX-ACB"/>
    <property type="match status" value="1"/>
</dbReference>
<dbReference type="SUPFAM" id="SSF54991">
    <property type="entry name" value="Anticodon-binding domain of PheRS"/>
    <property type="match status" value="1"/>
</dbReference>
<dbReference type="SUPFAM" id="SSF55681">
    <property type="entry name" value="Class II aaRS and biotin synthetases"/>
    <property type="match status" value="1"/>
</dbReference>
<dbReference type="PROSITE" id="PS50862">
    <property type="entry name" value="AA_TRNA_LIGASE_II"/>
    <property type="match status" value="1"/>
</dbReference>
<dbReference type="PROSITE" id="PS51447">
    <property type="entry name" value="FDX_ACB"/>
    <property type="match status" value="1"/>
</dbReference>